<protein>
    <recommendedName>
        <fullName evidence="1">Ribulose bisphosphate carboxylase large chain</fullName>
        <shortName evidence="1">RuBisCO large subunit</shortName>
        <ecNumber evidence="1">4.1.1.39</ecNumber>
    </recommendedName>
</protein>
<evidence type="ECO:0000255" key="1">
    <source>
        <dbReference type="HAMAP-Rule" id="MF_01338"/>
    </source>
</evidence>
<evidence type="ECO:0000305" key="2"/>
<keyword id="KW-0007">Acetylation</keyword>
<keyword id="KW-0113">Calvin cycle</keyword>
<keyword id="KW-0120">Carbon dioxide fixation</keyword>
<keyword id="KW-1015">Disulfide bond</keyword>
<keyword id="KW-0456">Lyase</keyword>
<keyword id="KW-0460">Magnesium</keyword>
<keyword id="KW-0479">Metal-binding</keyword>
<keyword id="KW-0488">Methylation</keyword>
<keyword id="KW-0503">Monooxygenase</keyword>
<keyword id="KW-0560">Oxidoreductase</keyword>
<keyword id="KW-0601">Photorespiration</keyword>
<keyword id="KW-0602">Photosynthesis</keyword>
<keyword id="KW-0934">Plastid</keyword>
<accession>A8W3J2</accession>
<organism>
    <name type="scientific">Cuscuta obtusiflora</name>
    <name type="common">Peruvian dodder</name>
    <dbReference type="NCBI Taxonomy" id="437280"/>
    <lineage>
        <taxon>Eukaryota</taxon>
        <taxon>Viridiplantae</taxon>
        <taxon>Streptophyta</taxon>
        <taxon>Embryophyta</taxon>
        <taxon>Tracheophyta</taxon>
        <taxon>Spermatophyta</taxon>
        <taxon>Magnoliopsida</taxon>
        <taxon>eudicotyledons</taxon>
        <taxon>Gunneridae</taxon>
        <taxon>Pentapetalae</taxon>
        <taxon>asterids</taxon>
        <taxon>lamiids</taxon>
        <taxon>Solanales</taxon>
        <taxon>Convolvulaceae</taxon>
        <taxon>Cuscuteae</taxon>
        <taxon>Cuscuta</taxon>
        <taxon>Cuscuta subgen. Grammica</taxon>
        <taxon>Cuscuta sect. Cleistogrammica</taxon>
    </lineage>
</organism>
<reference key="1">
    <citation type="journal article" date="2007" name="BMC Plant Biol.">
        <title>Complete plastid genome sequences suggest strong selection for retention of photosynthetic genes in the parasitic plant genus Cuscuta.</title>
        <authorList>
            <person name="McNeal J.R."/>
            <person name="Kuehl J.V."/>
            <person name="Boore J.L."/>
            <person name="dePamphilis C.W."/>
        </authorList>
    </citation>
    <scope>NUCLEOTIDE SEQUENCE [LARGE SCALE GENOMIC DNA]</scope>
</reference>
<name>RBL_CUSOB</name>
<geneLocation type="plastid"/>
<gene>
    <name evidence="1" type="primary">rbcL</name>
</gene>
<dbReference type="EC" id="4.1.1.39" evidence="1"/>
<dbReference type="EMBL" id="EU189133">
    <property type="protein sequence ID" value="ABW20567.1"/>
    <property type="molecule type" value="Genomic_DNA"/>
</dbReference>
<dbReference type="RefSeq" id="YP_001531222.1">
    <property type="nucleotide sequence ID" value="NC_009949.1"/>
</dbReference>
<dbReference type="SMR" id="A8W3J2"/>
<dbReference type="GeneID" id="5714848"/>
<dbReference type="GO" id="GO:0009536">
    <property type="term" value="C:plastid"/>
    <property type="evidence" value="ECO:0007669"/>
    <property type="project" value="UniProtKB-SubCell"/>
</dbReference>
<dbReference type="GO" id="GO:0000287">
    <property type="term" value="F:magnesium ion binding"/>
    <property type="evidence" value="ECO:0007669"/>
    <property type="project" value="UniProtKB-UniRule"/>
</dbReference>
<dbReference type="GO" id="GO:0004497">
    <property type="term" value="F:monooxygenase activity"/>
    <property type="evidence" value="ECO:0007669"/>
    <property type="project" value="UniProtKB-KW"/>
</dbReference>
<dbReference type="GO" id="GO:0016984">
    <property type="term" value="F:ribulose-bisphosphate carboxylase activity"/>
    <property type="evidence" value="ECO:0007669"/>
    <property type="project" value="UniProtKB-UniRule"/>
</dbReference>
<dbReference type="GO" id="GO:0009853">
    <property type="term" value="P:photorespiration"/>
    <property type="evidence" value="ECO:0007669"/>
    <property type="project" value="UniProtKB-KW"/>
</dbReference>
<dbReference type="GO" id="GO:0019253">
    <property type="term" value="P:reductive pentose-phosphate cycle"/>
    <property type="evidence" value="ECO:0007669"/>
    <property type="project" value="UniProtKB-UniRule"/>
</dbReference>
<dbReference type="CDD" id="cd08212">
    <property type="entry name" value="RuBisCO_large_I"/>
    <property type="match status" value="1"/>
</dbReference>
<dbReference type="FunFam" id="3.20.20.110:FF:000001">
    <property type="entry name" value="Ribulose bisphosphate carboxylase large chain"/>
    <property type="match status" value="1"/>
</dbReference>
<dbReference type="FunFam" id="3.30.70.150:FF:000001">
    <property type="entry name" value="Ribulose bisphosphate carboxylase large chain"/>
    <property type="match status" value="1"/>
</dbReference>
<dbReference type="Gene3D" id="3.20.20.110">
    <property type="entry name" value="Ribulose bisphosphate carboxylase, large subunit, C-terminal domain"/>
    <property type="match status" value="1"/>
</dbReference>
<dbReference type="Gene3D" id="3.30.70.150">
    <property type="entry name" value="RuBisCO large subunit, N-terminal domain"/>
    <property type="match status" value="1"/>
</dbReference>
<dbReference type="HAMAP" id="MF_01338">
    <property type="entry name" value="RuBisCO_L_type1"/>
    <property type="match status" value="1"/>
</dbReference>
<dbReference type="InterPro" id="IPR033966">
    <property type="entry name" value="RuBisCO"/>
</dbReference>
<dbReference type="InterPro" id="IPR020878">
    <property type="entry name" value="RuBisCo_large_chain_AS"/>
</dbReference>
<dbReference type="InterPro" id="IPR000685">
    <property type="entry name" value="RuBisCO_lsu_C"/>
</dbReference>
<dbReference type="InterPro" id="IPR036376">
    <property type="entry name" value="RuBisCO_lsu_C_sf"/>
</dbReference>
<dbReference type="InterPro" id="IPR017443">
    <property type="entry name" value="RuBisCO_lsu_fd_N"/>
</dbReference>
<dbReference type="InterPro" id="IPR036422">
    <property type="entry name" value="RuBisCO_lsu_N_sf"/>
</dbReference>
<dbReference type="InterPro" id="IPR020888">
    <property type="entry name" value="RuBisCO_lsuI"/>
</dbReference>
<dbReference type="NCBIfam" id="NF003252">
    <property type="entry name" value="PRK04208.1"/>
    <property type="match status" value="1"/>
</dbReference>
<dbReference type="PANTHER" id="PTHR42704">
    <property type="entry name" value="RIBULOSE BISPHOSPHATE CARBOXYLASE"/>
    <property type="match status" value="1"/>
</dbReference>
<dbReference type="PANTHER" id="PTHR42704:SF16">
    <property type="entry name" value="RIBULOSE BISPHOSPHATE CARBOXYLASE LARGE CHAIN"/>
    <property type="match status" value="1"/>
</dbReference>
<dbReference type="Pfam" id="PF00016">
    <property type="entry name" value="RuBisCO_large"/>
    <property type="match status" value="1"/>
</dbReference>
<dbReference type="Pfam" id="PF02788">
    <property type="entry name" value="RuBisCO_large_N"/>
    <property type="match status" value="1"/>
</dbReference>
<dbReference type="SFLD" id="SFLDG01052">
    <property type="entry name" value="RuBisCO"/>
    <property type="match status" value="1"/>
</dbReference>
<dbReference type="SFLD" id="SFLDS00014">
    <property type="entry name" value="RuBisCO"/>
    <property type="match status" value="1"/>
</dbReference>
<dbReference type="SFLD" id="SFLDG00301">
    <property type="entry name" value="RuBisCO-like_proteins"/>
    <property type="match status" value="1"/>
</dbReference>
<dbReference type="SUPFAM" id="SSF51649">
    <property type="entry name" value="RuBisCo, C-terminal domain"/>
    <property type="match status" value="1"/>
</dbReference>
<dbReference type="SUPFAM" id="SSF54966">
    <property type="entry name" value="RuBisCO, large subunit, small (N-terminal) domain"/>
    <property type="match status" value="1"/>
</dbReference>
<dbReference type="PROSITE" id="PS00157">
    <property type="entry name" value="RUBISCO_LARGE"/>
    <property type="match status" value="1"/>
</dbReference>
<sequence length="481" mass="53377">MSPQTETKTSVGFKAGVKDYKLTYYTPDYETKATDILAAFRVTPQPGVPPEEAGAAVAAESSTGTWTTVWTDGLTSLDRYKGRCYHIERVFGEKDQYIAYVAYPLDLFEEGSVTNMFTSIVGNVFGFKALRALRLEDLRIPAAYTKTFQGPPHGIQVERDKLNKYGRPLLGCTIKPKLGLSAKNYGRAVYECLRGGLDFTKDDENVNSQPFMRWRDRFLFCAEAIYKSQAETGEIKGHYLNATAGTCEEMLRRAYFAKELGVPIIMHDYLTGGFTANTSLAHFCRENGLLLHIHRAMHAVIDRQKNHGIHFRVLAKALRLSGGDHIHAGTVVGKLEGEREITLGFVDLLRDNFVEKDRSRGIYFTQDWVSLPGVLPVASGGIHVWHMPALTDIFGDDSVLQFGGGTLGHPWGNAPGAVANRVALEACVQARNEGLDLAQDGNSIIRQASKWSPELAAACEVWKEIQFNFKSVDTLDLNEIK</sequence>
<comment type="function">
    <text evidence="1">RuBisCO catalyzes two reactions: the carboxylation of D-ribulose 1,5-bisphosphate, the primary event in carbon dioxide fixation, as well as the oxidative fragmentation of the pentose substrate in the photorespiration process. Both reactions occur simultaneously and in competition at the same active site.</text>
</comment>
<comment type="catalytic activity">
    <reaction evidence="1">
        <text>2 (2R)-3-phosphoglycerate + 2 H(+) = D-ribulose 1,5-bisphosphate + CO2 + H2O</text>
        <dbReference type="Rhea" id="RHEA:23124"/>
        <dbReference type="ChEBI" id="CHEBI:15377"/>
        <dbReference type="ChEBI" id="CHEBI:15378"/>
        <dbReference type="ChEBI" id="CHEBI:16526"/>
        <dbReference type="ChEBI" id="CHEBI:57870"/>
        <dbReference type="ChEBI" id="CHEBI:58272"/>
        <dbReference type="EC" id="4.1.1.39"/>
    </reaction>
</comment>
<comment type="catalytic activity">
    <reaction evidence="1">
        <text>D-ribulose 1,5-bisphosphate + O2 = 2-phosphoglycolate + (2R)-3-phosphoglycerate + 2 H(+)</text>
        <dbReference type="Rhea" id="RHEA:36631"/>
        <dbReference type="ChEBI" id="CHEBI:15378"/>
        <dbReference type="ChEBI" id="CHEBI:15379"/>
        <dbReference type="ChEBI" id="CHEBI:57870"/>
        <dbReference type="ChEBI" id="CHEBI:58033"/>
        <dbReference type="ChEBI" id="CHEBI:58272"/>
    </reaction>
</comment>
<comment type="cofactor">
    <cofactor evidence="1">
        <name>Mg(2+)</name>
        <dbReference type="ChEBI" id="CHEBI:18420"/>
    </cofactor>
    <text evidence="1">Binds 1 Mg(2+) ion per subunit.</text>
</comment>
<comment type="subunit">
    <text evidence="1">Heterohexadecamer of 8 large chains and 8 small chains; disulfide-linked. The disulfide link is formed within the large subunit homodimers.</text>
</comment>
<comment type="subcellular location">
    <subcellularLocation>
        <location>Plastid</location>
    </subcellularLocation>
</comment>
<comment type="PTM">
    <text evidence="1">The disulfide bond which can form in the large chain dimeric partners within the hexadecamer appears to be associated with oxidative stress and protein turnover.</text>
</comment>
<comment type="miscellaneous">
    <text evidence="1">The basic functional RuBisCO is composed of a large chain homodimer in a 'head-to-tail' conformation. In form I RuBisCO this homodimer is arranged in a barrel-like tetramer with the small subunits forming a tetrameric 'cap' on each end of the 'barrel'.</text>
</comment>
<comment type="similarity">
    <text evidence="1">Belongs to the RuBisCO large chain family. Type I subfamily.</text>
</comment>
<comment type="caution">
    <text evidence="2">Only inflorescences, fruits, starved seedlings and stressed stem tips are green in this organism.</text>
</comment>
<proteinExistence type="inferred from homology"/>
<feature type="propeptide" id="PRO_0000355768" evidence="1">
    <location>
        <begin position="1"/>
        <end position="2"/>
    </location>
</feature>
<feature type="chain" id="PRO_0000355769" description="Ribulose bisphosphate carboxylase large chain">
    <location>
        <begin position="3"/>
        <end position="481"/>
    </location>
</feature>
<feature type="active site" description="Proton acceptor" evidence="1">
    <location>
        <position position="175"/>
    </location>
</feature>
<feature type="active site" description="Proton acceptor" evidence="1">
    <location>
        <position position="294"/>
    </location>
</feature>
<feature type="binding site" description="in homodimeric partner" evidence="1">
    <location>
        <position position="123"/>
    </location>
    <ligand>
        <name>substrate</name>
    </ligand>
</feature>
<feature type="binding site" evidence="1">
    <location>
        <position position="173"/>
    </location>
    <ligand>
        <name>substrate</name>
    </ligand>
</feature>
<feature type="binding site" evidence="1">
    <location>
        <position position="177"/>
    </location>
    <ligand>
        <name>substrate</name>
    </ligand>
</feature>
<feature type="binding site" description="via carbamate group" evidence="1">
    <location>
        <position position="201"/>
    </location>
    <ligand>
        <name>Mg(2+)</name>
        <dbReference type="ChEBI" id="CHEBI:18420"/>
    </ligand>
</feature>
<feature type="binding site" evidence="1">
    <location>
        <position position="203"/>
    </location>
    <ligand>
        <name>Mg(2+)</name>
        <dbReference type="ChEBI" id="CHEBI:18420"/>
    </ligand>
</feature>
<feature type="binding site" evidence="1">
    <location>
        <position position="204"/>
    </location>
    <ligand>
        <name>Mg(2+)</name>
        <dbReference type="ChEBI" id="CHEBI:18420"/>
    </ligand>
</feature>
<feature type="binding site" evidence="1">
    <location>
        <position position="295"/>
    </location>
    <ligand>
        <name>substrate</name>
    </ligand>
</feature>
<feature type="binding site" evidence="1">
    <location>
        <position position="327"/>
    </location>
    <ligand>
        <name>substrate</name>
    </ligand>
</feature>
<feature type="binding site" evidence="1">
    <location>
        <position position="379"/>
    </location>
    <ligand>
        <name>substrate</name>
    </ligand>
</feature>
<feature type="site" description="Transition state stabilizer" evidence="1">
    <location>
        <position position="334"/>
    </location>
</feature>
<feature type="modified residue" description="N-acetylproline" evidence="1">
    <location>
        <position position="3"/>
    </location>
</feature>
<feature type="modified residue" description="N6,N6,N6-trimethyllysine" evidence="1">
    <location>
        <position position="14"/>
    </location>
</feature>
<feature type="modified residue" description="N6-carboxylysine" evidence="1">
    <location>
        <position position="201"/>
    </location>
</feature>
<feature type="disulfide bond" description="Interchain; in linked form" evidence="1">
    <location>
        <position position="247"/>
    </location>
</feature>